<evidence type="ECO:0000255" key="1">
    <source>
        <dbReference type="HAMAP-Rule" id="MF_01128"/>
    </source>
</evidence>
<evidence type="ECO:0000269" key="2">
    <source>
    </source>
</evidence>
<evidence type="ECO:0000269" key="3">
    <source>
    </source>
</evidence>
<evidence type="ECO:0000269" key="4">
    <source>
    </source>
</evidence>
<evidence type="ECO:0000269" key="5">
    <source>
    </source>
</evidence>
<evidence type="ECO:0000269" key="6">
    <source>
    </source>
</evidence>
<evidence type="ECO:0000269" key="7">
    <source>
    </source>
</evidence>
<evidence type="ECO:0000269" key="8">
    <source>
    </source>
</evidence>
<evidence type="ECO:0000269" key="9">
    <source>
    </source>
</evidence>
<evidence type="ECO:0000305" key="10"/>
<evidence type="ECO:0000305" key="11">
    <source>
    </source>
</evidence>
<evidence type="ECO:0000305" key="12">
    <source>
    </source>
</evidence>
<evidence type="ECO:0007744" key="13">
    <source>
        <dbReference type="PDB" id="1OTS"/>
    </source>
</evidence>
<evidence type="ECO:0007744" key="14">
    <source>
        <dbReference type="PDB" id="1OTT"/>
    </source>
</evidence>
<evidence type="ECO:0007744" key="15">
    <source>
        <dbReference type="PDB" id="1OTU"/>
    </source>
</evidence>
<evidence type="ECO:0007744" key="16">
    <source>
        <dbReference type="PDB" id="4ENE"/>
    </source>
</evidence>
<evidence type="ECO:0007744" key="17">
    <source>
        <dbReference type="PDB" id="6LSC"/>
    </source>
</evidence>
<evidence type="ECO:0007829" key="18">
    <source>
        <dbReference type="PDB" id="1KPK"/>
    </source>
</evidence>
<evidence type="ECO:0007829" key="19">
    <source>
        <dbReference type="PDB" id="4ENE"/>
    </source>
</evidence>
<evidence type="ECO:0007829" key="20">
    <source>
        <dbReference type="PDB" id="8GA1"/>
    </source>
</evidence>
<evidence type="ECO:0007829" key="21">
    <source>
        <dbReference type="PDB" id="8GA3"/>
    </source>
</evidence>
<accession>P37019</accession>
<accession>P77394</accession>
<organism>
    <name type="scientific">Escherichia coli (strain K12)</name>
    <dbReference type="NCBI Taxonomy" id="83333"/>
    <lineage>
        <taxon>Bacteria</taxon>
        <taxon>Pseudomonadati</taxon>
        <taxon>Pseudomonadota</taxon>
        <taxon>Gammaproteobacteria</taxon>
        <taxon>Enterobacterales</taxon>
        <taxon>Enterobacteriaceae</taxon>
        <taxon>Escherichia</taxon>
    </lineage>
</organism>
<comment type="function">
    <text evidence="2 4 5 6 8">Proton-coupled chloride transporter. Functions as antiport system and exchanges two chloride ions for 1 proton. Probably acts as an electrical shunt for an outwardly-directed proton pump that is linked to amino acid decarboxylation, as part of the extreme acid resistance (XAR) response.</text>
</comment>
<comment type="catalytic activity">
    <reaction evidence="1 4 6">
        <text>2 chloride(in) + H(+)(out) = 2 chloride(out) + H(+)(in)</text>
        <dbReference type="Rhea" id="RHEA:29567"/>
        <dbReference type="ChEBI" id="CHEBI:15378"/>
        <dbReference type="ChEBI" id="CHEBI:17996"/>
    </reaction>
</comment>
<comment type="subunit">
    <text evidence="8">Homodimer.</text>
</comment>
<comment type="interaction">
    <interactant intactId="EBI-15719361">
        <id>P37019</id>
    </interactant>
    <interactant intactId="EBI-15719361">
        <id>P37019</id>
        <label>clcA</label>
    </interactant>
    <organismsDiffer>false</organismsDiffer>
    <experiments>7</experiments>
</comment>
<comment type="subcellular location">
    <subcellularLocation>
        <location evidence="10">Cell inner membrane</location>
        <topology evidence="10">Multi-pass membrane protein</topology>
    </subcellularLocation>
</comment>
<comment type="induction">
    <text>By acid-shock conditions.</text>
</comment>
<comment type="similarity">
    <text evidence="10">Belongs to the chloride channel (TC 2.A.49) family. ClcA subfamily.</text>
</comment>
<comment type="caution">
    <text evidence="10">Was originally thought to be a voltage-gated ClC-type chloride channel.</text>
</comment>
<keyword id="KW-0002">3D-structure</keyword>
<keyword id="KW-0050">Antiport</keyword>
<keyword id="KW-0997">Cell inner membrane</keyword>
<keyword id="KW-1003">Cell membrane</keyword>
<keyword id="KW-0868">Chloride</keyword>
<keyword id="KW-0406">Ion transport</keyword>
<keyword id="KW-0472">Membrane</keyword>
<keyword id="KW-1185">Reference proteome</keyword>
<keyword id="KW-0346">Stress response</keyword>
<keyword id="KW-0812">Transmembrane</keyword>
<keyword id="KW-1133">Transmembrane helix</keyword>
<keyword id="KW-0813">Transport</keyword>
<reference key="1">
    <citation type="journal article" date="1994" name="Nucleic Acids Res.">
        <title>Systematic sequencing of the Escherichia coli genome: analysis of the 2.4-4.1 min (110,917-193,643 bp) region.</title>
        <authorList>
            <person name="Fujita N."/>
            <person name="Mori H."/>
            <person name="Yura T."/>
            <person name="Ishihama A."/>
        </authorList>
    </citation>
    <scope>NUCLEOTIDE SEQUENCE [LARGE SCALE GENOMIC DNA]</scope>
    <source>
        <strain>K12 / W3110 / ATCC 27325 / DSM 5911</strain>
    </source>
</reference>
<reference key="2">
    <citation type="submission" date="1997-01" db="EMBL/GenBank/DDBJ databases">
        <title>Sequence of minutes 4-25 of Escherichia coli.</title>
        <authorList>
            <person name="Chung E."/>
            <person name="Allen E."/>
            <person name="Araujo R."/>
            <person name="Aparicio A.M."/>
            <person name="Davis K."/>
            <person name="Duncan M."/>
            <person name="Federspiel N."/>
            <person name="Hyman R."/>
            <person name="Kalman S."/>
            <person name="Komp C."/>
            <person name="Kurdi O."/>
            <person name="Lew H."/>
            <person name="Lin D."/>
            <person name="Namath A."/>
            <person name="Oefner P."/>
            <person name="Roberts D."/>
            <person name="Schramm S."/>
            <person name="Davis R.W."/>
        </authorList>
    </citation>
    <scope>NUCLEOTIDE SEQUENCE [LARGE SCALE GENOMIC DNA]</scope>
    <source>
        <strain>K12 / MG1655 / ATCC 47076</strain>
    </source>
</reference>
<reference key="3">
    <citation type="journal article" date="1997" name="Science">
        <title>The complete genome sequence of Escherichia coli K-12.</title>
        <authorList>
            <person name="Blattner F.R."/>
            <person name="Plunkett G. III"/>
            <person name="Bloch C.A."/>
            <person name="Perna N.T."/>
            <person name="Burland V."/>
            <person name="Riley M."/>
            <person name="Collado-Vides J."/>
            <person name="Glasner J.D."/>
            <person name="Rode C.K."/>
            <person name="Mayhew G.F."/>
            <person name="Gregor J."/>
            <person name="Davis N.W."/>
            <person name="Kirkpatrick H.A."/>
            <person name="Goeden M.A."/>
            <person name="Rose D.J."/>
            <person name="Mau B."/>
            <person name="Shao Y."/>
        </authorList>
    </citation>
    <scope>NUCLEOTIDE SEQUENCE [LARGE SCALE GENOMIC DNA]</scope>
    <source>
        <strain>K12 / MG1655 / ATCC 47076</strain>
    </source>
</reference>
<reference key="4">
    <citation type="journal article" date="2006" name="Mol. Syst. Biol.">
        <title>Highly accurate genome sequences of Escherichia coli K-12 strains MG1655 and W3110.</title>
        <authorList>
            <person name="Hayashi K."/>
            <person name="Morooka N."/>
            <person name="Yamamoto Y."/>
            <person name="Fujita K."/>
            <person name="Isono K."/>
            <person name="Choi S."/>
            <person name="Ohtsubo E."/>
            <person name="Baba T."/>
            <person name="Wanner B.L."/>
            <person name="Mori H."/>
            <person name="Horiuchi T."/>
        </authorList>
    </citation>
    <scope>NUCLEOTIDE SEQUENCE [LARGE SCALE GENOMIC DNA]</scope>
    <scope>SEQUENCE REVISION</scope>
    <source>
        <strain>K12 / W3110 / ATCC 27325 / DSM 5911</strain>
    </source>
</reference>
<reference key="5">
    <citation type="journal article" date="1999" name="J. Gen. Physiol.">
        <title>High-level expression, functional reconstitution, and quaternary structure of a prokaryotic ClC-type chloride channel.</title>
        <authorList>
            <person name="Maduke M."/>
            <person name="Pheasant D.J."/>
            <person name="Miller C."/>
        </authorList>
    </citation>
    <scope>PRELIMINARY CHARACTERIZATION</scope>
    <source>
        <strain>K12 / MG1655 / ATCC 47076</strain>
    </source>
</reference>
<reference key="6">
    <citation type="journal article" date="2000" name="FEBS Lett.">
        <title>Expression, purification, and initial structural characterization of YadQ, a bacterial homolog of mammalian ClC chloride channel proteins.</title>
        <authorList>
            <person name="Purdy M.D."/>
            <person name="Wiener M.C."/>
        </authorList>
    </citation>
    <scope>PRELIMINARY CHARACTERIZATION</scope>
    <source>
        <strain>K12 / MG1655 / ATCC 47076</strain>
    </source>
</reference>
<reference key="7">
    <citation type="journal article" date="2002" name="Nature">
        <title>A biological role for prokaryotic ClC chloride channels.</title>
        <authorList>
            <person name="Iyer R."/>
            <person name="Iverson T.M."/>
            <person name="Accardi A."/>
            <person name="Miller C."/>
        </authorList>
    </citation>
    <scope>FUNCTION</scope>
    <source>
        <strain>K12 / MG1655 / ATCC 47076</strain>
    </source>
</reference>
<reference key="8">
    <citation type="journal article" date="2004" name="Nature">
        <title>Secondary active transport mediated by a prokaryotic homologue of ClC Cl-channels.</title>
        <authorList>
            <person name="Accardi A."/>
            <person name="Miller C."/>
        </authorList>
    </citation>
    <scope>FUNCTION</scope>
    <scope>CATALYTIC ACTIVITY</scope>
    <scope>MUTAGENESIS OF GLU-148</scope>
</reference>
<reference key="9">
    <citation type="journal article" date="2001" name="Nature">
        <title>Projection structure of a ClC-type chloride channel at 6.5 A resolution.</title>
        <authorList>
            <person name="Mindell J.A."/>
            <person name="Maduke M."/>
            <person name="Miller C."/>
            <person name="Grigorieff N."/>
        </authorList>
    </citation>
    <scope>X-RAY CRYSTALLOGRAPHY (6.5 ANGSTROMS)</scope>
    <source>
        <strain>K12 / MG1655 / ATCC 47076</strain>
    </source>
</reference>
<reference key="10">
    <citation type="journal article" date="2002" name="Nature">
        <title>X-ray structure of a ClC chloride channel at 3.0 A reveals the molecular basis of anion selectivity.</title>
        <authorList>
            <person name="Dutzler R."/>
            <person name="Campbell E.B."/>
            <person name="Cadene M."/>
            <person name="Chait B.T."/>
            <person name="MacKinnon R."/>
        </authorList>
    </citation>
    <scope>X-RAY CRYSTALLOGRAPHY (3.5 ANGSTROMS)</scope>
</reference>
<reference evidence="13 14 15" key="11">
    <citation type="journal article" date="2003" name="Science">
        <title>Gating the selectivity filter in ClC chloride channels.</title>
        <authorList>
            <person name="Dutzler R."/>
            <person name="Campbell E.B."/>
            <person name="MacKinnon R."/>
        </authorList>
    </citation>
    <scope>X-RAY CRYSTALLOGRAPHY (2.51 ANGSTROMS) OF 17-460 OF MUTANTS ALA-148 AND GLN-148 IN COMPLEX WITH CHLORIDE</scope>
    <scope>MUTAGENESIS OF GLU-148</scope>
</reference>
<reference key="12">
    <citation type="journal article" date="2006" name="EMBO J.">
        <title>Ion-binding properties of the ClC chloride selectivity filter.</title>
        <authorList>
            <person name="Lobet S."/>
            <person name="Dutzler R."/>
        </authorList>
    </citation>
    <scope>X-RAY CRYSTALLOGRAPHY (3.1 ANGSTROMS)</scope>
    <scope>FUNCTION</scope>
    <scope>ION BINDING SITES</scope>
    <scope>MUTAGENESIS OF SER-107; GLU-148 AND TYR-445</scope>
</reference>
<reference key="13">
    <citation type="journal article" date="2006" name="J. Mol. Biol.">
        <title>Uncoupling of a CLC Cl-/H+ exchange transporter by polyatomic anions.</title>
        <authorList>
            <person name="Nguitragool W."/>
            <person name="Miller C."/>
        </authorList>
    </citation>
    <scope>X-RAY CRYSTALLOGRAPHY (3.1 ANGSTROMS) OF 1-465</scope>
    <scope>FUNCTION</scope>
    <scope>CATALYTIC ACTIVITY</scope>
</reference>
<reference key="14">
    <citation type="journal article" date="2006" name="J. Mol. Biol.">
        <title>Synergism between halide binding and proton transport in a CLC-type exchanger.</title>
        <authorList>
            <person name="Accardi A."/>
            <person name="Lobet S."/>
            <person name="Williams C."/>
            <person name="Miller C."/>
            <person name="Dutzler R."/>
        </authorList>
    </citation>
    <scope>X-RAY CRYSTALLOGRAPHY (3.3 ANGSTROMS)</scope>
    <scope>MUTAGENESIS OF TYR-445</scope>
</reference>
<reference key="15">
    <citation type="journal article" date="2008" name="Proc. Natl. Acad. Sci. U.S.A.">
        <title>Ion permeation through a Cl--selective channel designed from a CLC Cl-/H+ exchanger.</title>
        <authorList>
            <person name="Jayaram H."/>
            <person name="Accardi A."/>
            <person name="Wu F."/>
            <person name="Williams C."/>
            <person name="Miller C."/>
        </authorList>
    </citation>
    <scope>X-RAY CRYSTALLOGRAPHY (2.8 ANGSTROMS) OF MUTANT ALA-148/ALA-445</scope>
    <scope>FUNCTION</scope>
    <scope>SUBUNIT</scope>
    <scope>MUTAGENESIS OF GLU-148 AND TYR-445</scope>
</reference>
<reference key="16">
    <citation type="journal article" date="2009" name="J. Gen. Physiol.">
        <title>Intracellular proton-transfer mutants in a CLC Cl-/H+ exchanger.</title>
        <authorList>
            <person name="Lim H.-H."/>
            <person name="Miller C."/>
        </authorList>
    </citation>
    <scope>X-RAY CRYSTALLOGRAPHY (2.9 ANGSTROMS) OF MUTANTS HIS-203 AND VAL-203</scope>
    <scope>MUTAGENESIS OF GLU-203</scope>
</reference>
<name>CLCA_ECOLI</name>
<dbReference type="EMBL" id="U70214">
    <property type="protein sequence ID" value="AAB08585.1"/>
    <property type="molecule type" value="Genomic_DNA"/>
</dbReference>
<dbReference type="EMBL" id="U00096">
    <property type="protein sequence ID" value="AAC73266.1"/>
    <property type="molecule type" value="Genomic_DNA"/>
</dbReference>
<dbReference type="EMBL" id="AP009048">
    <property type="protein sequence ID" value="BAB96732.2"/>
    <property type="molecule type" value="Genomic_DNA"/>
</dbReference>
<dbReference type="PIR" id="C64739">
    <property type="entry name" value="C64739"/>
</dbReference>
<dbReference type="RefSeq" id="NP_414697.1">
    <property type="nucleotide sequence ID" value="NC_000913.3"/>
</dbReference>
<dbReference type="RefSeq" id="WP_000845394.1">
    <property type="nucleotide sequence ID" value="NZ_STEB01000032.1"/>
</dbReference>
<dbReference type="PDB" id="1KPK">
    <property type="method" value="X-ray"/>
    <property type="resolution" value="3.50 A"/>
    <property type="chains" value="A/B/C/D/E/F=1-473"/>
</dbReference>
<dbReference type="PDB" id="1OTS">
    <property type="method" value="X-ray"/>
    <property type="resolution" value="2.51 A"/>
    <property type="chains" value="A/B=1-465"/>
</dbReference>
<dbReference type="PDB" id="1OTT">
    <property type="method" value="X-ray"/>
    <property type="resolution" value="3.00 A"/>
    <property type="chains" value="A/B=1-465"/>
</dbReference>
<dbReference type="PDB" id="1OTU">
    <property type="method" value="X-ray"/>
    <property type="resolution" value="3.30 A"/>
    <property type="chains" value="A/B=1-465"/>
</dbReference>
<dbReference type="PDB" id="2EXW">
    <property type="method" value="X-ray"/>
    <property type="resolution" value="3.20 A"/>
    <property type="chains" value="A/B=1-473"/>
</dbReference>
<dbReference type="PDB" id="2EXY">
    <property type="method" value="X-ray"/>
    <property type="resolution" value="3.10 A"/>
    <property type="chains" value="A/B=1-473"/>
</dbReference>
<dbReference type="PDB" id="2EZ0">
    <property type="method" value="X-ray"/>
    <property type="resolution" value="3.54 A"/>
    <property type="chains" value="A/B=1-473"/>
</dbReference>
<dbReference type="PDB" id="2FEC">
    <property type="method" value="X-ray"/>
    <property type="resolution" value="3.97 A"/>
    <property type="chains" value="A/B=1-465"/>
</dbReference>
<dbReference type="PDB" id="2FED">
    <property type="method" value="X-ray"/>
    <property type="resolution" value="3.32 A"/>
    <property type="chains" value="A/B=1-465"/>
</dbReference>
<dbReference type="PDB" id="2FEE">
    <property type="method" value="X-ray"/>
    <property type="resolution" value="3.20 A"/>
    <property type="chains" value="A/B=1-465"/>
</dbReference>
<dbReference type="PDB" id="2H2P">
    <property type="method" value="X-ray"/>
    <property type="resolution" value="3.10 A"/>
    <property type="chains" value="A/B=1-465"/>
</dbReference>
<dbReference type="PDB" id="2H2S">
    <property type="method" value="X-ray"/>
    <property type="resolution" value="3.10 A"/>
    <property type="chains" value="A/B=1-465"/>
</dbReference>
<dbReference type="PDB" id="2HLF">
    <property type="method" value="X-ray"/>
    <property type="resolution" value="3.30 A"/>
    <property type="chains" value="A/B=17-460"/>
</dbReference>
<dbReference type="PDB" id="2HT2">
    <property type="method" value="X-ray"/>
    <property type="resolution" value="3.32 A"/>
    <property type="chains" value="A/B=1-473"/>
</dbReference>
<dbReference type="PDB" id="2HT3">
    <property type="method" value="X-ray"/>
    <property type="resolution" value="3.30 A"/>
    <property type="chains" value="A/B=1-473"/>
</dbReference>
<dbReference type="PDB" id="2HT4">
    <property type="method" value="X-ray"/>
    <property type="resolution" value="3.20 A"/>
    <property type="chains" value="A/B=1-473"/>
</dbReference>
<dbReference type="PDB" id="2HTK">
    <property type="method" value="X-ray"/>
    <property type="resolution" value="3.41 A"/>
    <property type="chains" value="A/B=1-473"/>
</dbReference>
<dbReference type="PDB" id="2HTL">
    <property type="method" value="X-ray"/>
    <property type="resolution" value="3.40 A"/>
    <property type="chains" value="A/B=1-473"/>
</dbReference>
<dbReference type="PDB" id="2R9H">
    <property type="method" value="X-ray"/>
    <property type="resolution" value="3.10 A"/>
    <property type="chains" value="A/B=17-460"/>
</dbReference>
<dbReference type="PDB" id="3DET">
    <property type="method" value="X-ray"/>
    <property type="resolution" value="2.80 A"/>
    <property type="chains" value="A/B=1-473"/>
</dbReference>
<dbReference type="PDB" id="3EJY">
    <property type="method" value="X-ray"/>
    <property type="resolution" value="3.20 A"/>
    <property type="chains" value="A/B=1-473"/>
</dbReference>
<dbReference type="PDB" id="3EJZ">
    <property type="method" value="X-ray"/>
    <property type="resolution" value="2.90 A"/>
    <property type="chains" value="A/B=1-473"/>
</dbReference>
<dbReference type="PDB" id="3NMO">
    <property type="method" value="X-ray"/>
    <property type="resolution" value="3.10 A"/>
    <property type="chains" value="A=1-465"/>
</dbReference>
<dbReference type="PDB" id="4ENE">
    <property type="method" value="X-ray"/>
    <property type="resolution" value="2.40 A"/>
    <property type="chains" value="A/B=17-460"/>
</dbReference>
<dbReference type="PDB" id="4KJP">
    <property type="method" value="X-ray"/>
    <property type="resolution" value="3.20 A"/>
    <property type="chains" value="A/B=17-460"/>
</dbReference>
<dbReference type="PDB" id="4KJQ">
    <property type="method" value="X-ray"/>
    <property type="resolution" value="2.88 A"/>
    <property type="chains" value="A/B=17-460"/>
</dbReference>
<dbReference type="PDB" id="4KJW">
    <property type="method" value="X-ray"/>
    <property type="resolution" value="3.03 A"/>
    <property type="chains" value="A/B=17-460"/>
</dbReference>
<dbReference type="PDB" id="4KK5">
    <property type="method" value="X-ray"/>
    <property type="resolution" value="3.17 A"/>
    <property type="chains" value="A/B=17-460"/>
</dbReference>
<dbReference type="PDB" id="4KK6">
    <property type="method" value="X-ray"/>
    <property type="resolution" value="3.18 A"/>
    <property type="chains" value="A/B=17-460"/>
</dbReference>
<dbReference type="PDB" id="4KK8">
    <property type="method" value="X-ray"/>
    <property type="resolution" value="2.86 A"/>
    <property type="chains" value="A/B=17-460"/>
</dbReference>
<dbReference type="PDB" id="4KK9">
    <property type="method" value="X-ray"/>
    <property type="resolution" value="3.00 A"/>
    <property type="chains" value="A/B=17-460"/>
</dbReference>
<dbReference type="PDB" id="4KKA">
    <property type="method" value="X-ray"/>
    <property type="resolution" value="3.00 A"/>
    <property type="chains" value="A/B=17-460"/>
</dbReference>
<dbReference type="PDB" id="4KKB">
    <property type="method" value="X-ray"/>
    <property type="resolution" value="3.02 A"/>
    <property type="chains" value="A/B=17-460"/>
</dbReference>
<dbReference type="PDB" id="4KKC">
    <property type="method" value="X-ray"/>
    <property type="resolution" value="3.18 A"/>
    <property type="chains" value="A/B=17-460"/>
</dbReference>
<dbReference type="PDB" id="4KKL">
    <property type="method" value="X-ray"/>
    <property type="resolution" value="2.85 A"/>
    <property type="chains" value="A/B=17-460"/>
</dbReference>
<dbReference type="PDB" id="4LOU">
    <property type="method" value="X-ray"/>
    <property type="resolution" value="2.98 A"/>
    <property type="chains" value="A/B=17-460"/>
</dbReference>
<dbReference type="PDB" id="4MQX">
    <property type="method" value="X-ray"/>
    <property type="resolution" value="3.52 A"/>
    <property type="chains" value="A/B=1-465"/>
</dbReference>
<dbReference type="PDB" id="5HD8">
    <property type="method" value="X-ray"/>
    <property type="resolution" value="3.15 A"/>
    <property type="chains" value="A/B=17-465"/>
</dbReference>
<dbReference type="PDB" id="6AD7">
    <property type="method" value="X-ray"/>
    <property type="resolution" value="2.95 A"/>
    <property type="chains" value="A/B=1-473"/>
</dbReference>
<dbReference type="PDB" id="6AD8">
    <property type="method" value="X-ray"/>
    <property type="resolution" value="3.30 A"/>
    <property type="chains" value="A/B=1-473"/>
</dbReference>
<dbReference type="PDB" id="6ADA">
    <property type="method" value="X-ray"/>
    <property type="resolution" value="3.15 A"/>
    <property type="chains" value="A/B=1-473"/>
</dbReference>
<dbReference type="PDB" id="6ADB">
    <property type="method" value="X-ray"/>
    <property type="resolution" value="2.69 A"/>
    <property type="chains" value="A/B=1-473"/>
</dbReference>
<dbReference type="PDB" id="6ADC">
    <property type="method" value="X-ray"/>
    <property type="resolution" value="3.06 A"/>
    <property type="chains" value="A/B=17-458"/>
</dbReference>
<dbReference type="PDB" id="6K5D">
    <property type="method" value="X-ray"/>
    <property type="resolution" value="3.20 A"/>
    <property type="chains" value="A/B=1-473"/>
</dbReference>
<dbReference type="PDB" id="6K5F">
    <property type="method" value="X-ray"/>
    <property type="resolution" value="3.20 A"/>
    <property type="chains" value="A/B=1-473"/>
</dbReference>
<dbReference type="PDB" id="6LSC">
    <property type="method" value="X-ray"/>
    <property type="resolution" value="3.21 A"/>
    <property type="chains" value="A=1-465"/>
</dbReference>
<dbReference type="PDB" id="6V2J">
    <property type="method" value="X-ray"/>
    <property type="resolution" value="2.62 A"/>
    <property type="chains" value="A=1-468"/>
</dbReference>
<dbReference type="PDB" id="7CVS">
    <property type="method" value="X-ray"/>
    <property type="resolution" value="3.01 A"/>
    <property type="chains" value="A/B=1-473"/>
</dbReference>
<dbReference type="PDB" id="7CVT">
    <property type="method" value="X-ray"/>
    <property type="resolution" value="2.90 A"/>
    <property type="chains" value="A/B=1-473"/>
</dbReference>
<dbReference type="PDB" id="7N8P">
    <property type="method" value="EM"/>
    <property type="resolution" value="3.42 A"/>
    <property type="chains" value="A/B=1-473"/>
</dbReference>
<dbReference type="PDB" id="7N9W">
    <property type="method" value="EM"/>
    <property type="resolution" value="4.16 A"/>
    <property type="chains" value="A/B=1-473"/>
</dbReference>
<dbReference type="PDB" id="7RNX">
    <property type="method" value="EM"/>
    <property type="resolution" value="3.42 A"/>
    <property type="chains" value="A/B=1-473"/>
</dbReference>
<dbReference type="PDB" id="7RO0">
    <property type="method" value="EM"/>
    <property type="resolution" value="3.75 A"/>
    <property type="chains" value="A/B=1-473"/>
</dbReference>
<dbReference type="PDB" id="7RP5">
    <property type="method" value="EM"/>
    <property type="resolution" value="3.72 A"/>
    <property type="chains" value="A/B=1-473"/>
</dbReference>
<dbReference type="PDB" id="7RP6">
    <property type="method" value="EM"/>
    <property type="resolution" value="3.78 A"/>
    <property type="chains" value="A/B=1-473"/>
</dbReference>
<dbReference type="PDB" id="7RQ7">
    <property type="method" value="EM"/>
    <property type="resolution" value="3.95 A"/>
    <property type="chains" value="A/B=1-473"/>
</dbReference>
<dbReference type="PDB" id="7RSB">
    <property type="method" value="EM"/>
    <property type="resolution" value="3.68 A"/>
    <property type="chains" value="A/B=1-473"/>
</dbReference>
<dbReference type="PDB" id="8GA0">
    <property type="method" value="EM"/>
    <property type="resolution" value="3.50 A"/>
    <property type="chains" value="A/B=1-473"/>
</dbReference>
<dbReference type="PDB" id="8GA1">
    <property type="method" value="EM"/>
    <property type="resolution" value="2.60 A"/>
    <property type="chains" value="A/B=1-461"/>
</dbReference>
<dbReference type="PDB" id="8GA3">
    <property type="method" value="EM"/>
    <property type="resolution" value="3.10 A"/>
    <property type="chains" value="A/B=1-461"/>
</dbReference>
<dbReference type="PDB" id="8GA5">
    <property type="method" value="EM"/>
    <property type="resolution" value="2.60 A"/>
    <property type="chains" value="A/B=1-461"/>
</dbReference>
<dbReference type="PDB" id="8GAH">
    <property type="method" value="EM"/>
    <property type="resolution" value="2.90 A"/>
    <property type="chains" value="A/B=1-461"/>
</dbReference>
<dbReference type="PDBsum" id="1KPK"/>
<dbReference type="PDBsum" id="1OTS"/>
<dbReference type="PDBsum" id="1OTT"/>
<dbReference type="PDBsum" id="1OTU"/>
<dbReference type="PDBsum" id="2EXW"/>
<dbReference type="PDBsum" id="2EXY"/>
<dbReference type="PDBsum" id="2EZ0"/>
<dbReference type="PDBsum" id="2FEC"/>
<dbReference type="PDBsum" id="2FED"/>
<dbReference type="PDBsum" id="2FEE"/>
<dbReference type="PDBsum" id="2H2P"/>
<dbReference type="PDBsum" id="2H2S"/>
<dbReference type="PDBsum" id="2HLF"/>
<dbReference type="PDBsum" id="2HT2"/>
<dbReference type="PDBsum" id="2HT3"/>
<dbReference type="PDBsum" id="2HT4"/>
<dbReference type="PDBsum" id="2HTK"/>
<dbReference type="PDBsum" id="2HTL"/>
<dbReference type="PDBsum" id="2R9H"/>
<dbReference type="PDBsum" id="3DET"/>
<dbReference type="PDBsum" id="3EJY"/>
<dbReference type="PDBsum" id="3EJZ"/>
<dbReference type="PDBsum" id="3NMO"/>
<dbReference type="PDBsum" id="4ENE"/>
<dbReference type="PDBsum" id="4KJP"/>
<dbReference type="PDBsum" id="4KJQ"/>
<dbReference type="PDBsum" id="4KJW"/>
<dbReference type="PDBsum" id="4KK5"/>
<dbReference type="PDBsum" id="4KK6"/>
<dbReference type="PDBsum" id="4KK8"/>
<dbReference type="PDBsum" id="4KK9"/>
<dbReference type="PDBsum" id="4KKA"/>
<dbReference type="PDBsum" id="4KKB"/>
<dbReference type="PDBsum" id="4KKC"/>
<dbReference type="PDBsum" id="4KKL"/>
<dbReference type="PDBsum" id="4LOU"/>
<dbReference type="PDBsum" id="4MQX"/>
<dbReference type="PDBsum" id="5HD8"/>
<dbReference type="PDBsum" id="6AD7"/>
<dbReference type="PDBsum" id="6AD8"/>
<dbReference type="PDBsum" id="6ADA"/>
<dbReference type="PDBsum" id="6ADB"/>
<dbReference type="PDBsum" id="6ADC"/>
<dbReference type="PDBsum" id="6K5D"/>
<dbReference type="PDBsum" id="6K5F"/>
<dbReference type="PDBsum" id="6LSC"/>
<dbReference type="PDBsum" id="6V2J"/>
<dbReference type="PDBsum" id="7CVS"/>
<dbReference type="PDBsum" id="7CVT"/>
<dbReference type="PDBsum" id="7N8P"/>
<dbReference type="PDBsum" id="7N9W"/>
<dbReference type="PDBsum" id="7RNX"/>
<dbReference type="PDBsum" id="7RO0"/>
<dbReference type="PDBsum" id="7RP5"/>
<dbReference type="PDBsum" id="7RP6"/>
<dbReference type="PDBsum" id="7RQ7"/>
<dbReference type="PDBsum" id="7RSB"/>
<dbReference type="PDBsum" id="8GA0"/>
<dbReference type="PDBsum" id="8GA1"/>
<dbReference type="PDBsum" id="8GA3"/>
<dbReference type="PDBsum" id="8GA5"/>
<dbReference type="PDBsum" id="8GAH"/>
<dbReference type="PCDDB" id="P37019"/>
<dbReference type="SMR" id="P37019"/>
<dbReference type="BioGRID" id="4259368">
    <property type="interactions" value="6"/>
</dbReference>
<dbReference type="DIP" id="DIP-9523N"/>
<dbReference type="FunCoup" id="P37019">
    <property type="interactions" value="326"/>
</dbReference>
<dbReference type="STRING" id="511145.b0155"/>
<dbReference type="TCDB" id="2.A.49.5.1">
    <property type="family name" value="the chloride carrier/channel (clc) family"/>
</dbReference>
<dbReference type="jPOST" id="P37019"/>
<dbReference type="PaxDb" id="511145-b0155"/>
<dbReference type="ABCD" id="P37019">
    <property type="antibodies" value="1 sequenced antibody"/>
</dbReference>
<dbReference type="EnsemblBacteria" id="AAC73266">
    <property type="protein sequence ID" value="AAC73266"/>
    <property type="gene ID" value="b0155"/>
</dbReference>
<dbReference type="GeneID" id="93777272"/>
<dbReference type="GeneID" id="946715"/>
<dbReference type="KEGG" id="ecj:JW5012"/>
<dbReference type="KEGG" id="eco:b0155"/>
<dbReference type="KEGG" id="ecoc:C3026_00705"/>
<dbReference type="PATRIC" id="fig|1411691.4.peg.2125"/>
<dbReference type="EchoBASE" id="EB2235"/>
<dbReference type="eggNOG" id="COG0038">
    <property type="taxonomic scope" value="Bacteria"/>
</dbReference>
<dbReference type="HOGENOM" id="CLU_015263_7_0_6"/>
<dbReference type="InParanoid" id="P37019"/>
<dbReference type="OMA" id="EGPTAQF"/>
<dbReference type="OrthoDB" id="9767361at2"/>
<dbReference type="PhylomeDB" id="P37019"/>
<dbReference type="BioCyc" id="EcoCyc:YADQ-MONOMER"/>
<dbReference type="BioCyc" id="MetaCyc:YADQ-MONOMER"/>
<dbReference type="EvolutionaryTrace" id="P37019"/>
<dbReference type="PRO" id="PR:P37019"/>
<dbReference type="Proteomes" id="UP000000625">
    <property type="component" value="Chromosome"/>
</dbReference>
<dbReference type="GO" id="GO:0005886">
    <property type="term" value="C:plasma membrane"/>
    <property type="evidence" value="ECO:0000314"/>
    <property type="project" value="EcoCyc"/>
</dbReference>
<dbReference type="GO" id="GO:0062158">
    <property type="term" value="F:chloride:proton antiporter activity"/>
    <property type="evidence" value="ECO:0000314"/>
    <property type="project" value="EcoCyc"/>
</dbReference>
<dbReference type="GO" id="GO:0042802">
    <property type="term" value="F:identical protein binding"/>
    <property type="evidence" value="ECO:0000353"/>
    <property type="project" value="IntAct"/>
</dbReference>
<dbReference type="GO" id="GO:0005247">
    <property type="term" value="F:voltage-gated chloride channel activity"/>
    <property type="evidence" value="ECO:0000318"/>
    <property type="project" value="GO_Central"/>
</dbReference>
<dbReference type="GO" id="GO:1990451">
    <property type="term" value="P:cellular stress response to acidic pH"/>
    <property type="evidence" value="ECO:0000314"/>
    <property type="project" value="EcoCyc"/>
</dbReference>
<dbReference type="GO" id="GO:1902476">
    <property type="term" value="P:chloride transmembrane transport"/>
    <property type="evidence" value="ECO:0000314"/>
    <property type="project" value="EcoCyc"/>
</dbReference>
<dbReference type="GO" id="GO:1902600">
    <property type="term" value="P:proton transmembrane transport"/>
    <property type="evidence" value="ECO:0000314"/>
    <property type="project" value="EcoCyc"/>
</dbReference>
<dbReference type="CDD" id="cd01031">
    <property type="entry name" value="EriC"/>
    <property type="match status" value="1"/>
</dbReference>
<dbReference type="FunFam" id="1.10.3080.10:FF:000005">
    <property type="entry name" value="H(+)/Cl(-) exchange transporter ClcA"/>
    <property type="match status" value="1"/>
</dbReference>
<dbReference type="Gene3D" id="1.10.3080.10">
    <property type="entry name" value="Clc chloride channel"/>
    <property type="match status" value="1"/>
</dbReference>
<dbReference type="HAMAP" id="MF_01128">
    <property type="entry name" value="CLC_ClcA"/>
    <property type="match status" value="1"/>
</dbReference>
<dbReference type="InterPro" id="IPR023861">
    <property type="entry name" value="Cl-channel_ClcA"/>
</dbReference>
<dbReference type="InterPro" id="IPR014743">
    <property type="entry name" value="Cl-channel_core"/>
</dbReference>
<dbReference type="InterPro" id="IPR001807">
    <property type="entry name" value="ClC"/>
</dbReference>
<dbReference type="NCBIfam" id="NF003640">
    <property type="entry name" value="PRK05277.1"/>
    <property type="match status" value="1"/>
</dbReference>
<dbReference type="PANTHER" id="PTHR45711">
    <property type="entry name" value="CHLORIDE CHANNEL PROTEIN"/>
    <property type="match status" value="1"/>
</dbReference>
<dbReference type="PANTHER" id="PTHR45711:SF6">
    <property type="entry name" value="CHLORIDE CHANNEL PROTEIN"/>
    <property type="match status" value="1"/>
</dbReference>
<dbReference type="Pfam" id="PF00654">
    <property type="entry name" value="Voltage_CLC"/>
    <property type="match status" value="1"/>
</dbReference>
<dbReference type="PRINTS" id="PR00762">
    <property type="entry name" value="CLCHANNEL"/>
</dbReference>
<dbReference type="SUPFAM" id="SSF81340">
    <property type="entry name" value="Clc chloride channel"/>
    <property type="match status" value="1"/>
</dbReference>
<protein>
    <recommendedName>
        <fullName>H(+)/Cl(-) exchange transporter ClcA</fullName>
    </recommendedName>
    <alternativeName>
        <fullName>ClC-ec1</fullName>
    </alternativeName>
</protein>
<feature type="chain" id="PRO_0000094473" description="H(+)/Cl(-) exchange transporter ClcA">
    <location>
        <begin position="1"/>
        <end position="473"/>
    </location>
</feature>
<feature type="topological domain" description="Cytoplasmic">
    <location>
        <begin position="1"/>
        <end position="32"/>
    </location>
</feature>
<feature type="transmembrane region" description="Helical">
    <location>
        <begin position="33"/>
        <end position="69"/>
    </location>
</feature>
<feature type="topological domain" description="Periplasmic">
    <location>
        <begin position="70"/>
        <end position="76"/>
    </location>
</feature>
<feature type="transmembrane region" description="Helical">
    <location>
        <begin position="77"/>
        <end position="100"/>
    </location>
</feature>
<feature type="intramembrane region" description="Helical">
    <location>
        <begin position="109"/>
        <end position="116"/>
    </location>
</feature>
<feature type="topological domain" description="Cytoplasmic">
    <location>
        <begin position="117"/>
        <end position="123"/>
    </location>
</feature>
<feature type="transmembrane region" description="Helical">
    <location>
        <begin position="124"/>
        <end position="141"/>
    </location>
</feature>
<feature type="transmembrane region" description="Helical">
    <location>
        <begin position="148"/>
        <end position="166"/>
    </location>
</feature>
<feature type="topological domain" description="Cytoplasmic">
    <location>
        <begin position="167"/>
        <end position="176"/>
    </location>
</feature>
<feature type="intramembrane region" description="Helical">
    <location>
        <begin position="177"/>
        <end position="189"/>
    </location>
</feature>
<feature type="intramembrane region" description="Helical">
    <location>
        <begin position="193"/>
        <end position="201"/>
    </location>
</feature>
<feature type="topological domain" description="Cytoplasmic">
    <location>
        <begin position="202"/>
        <end position="214"/>
    </location>
</feature>
<feature type="transmembrane region" description="Helical">
    <location>
        <begin position="215"/>
        <end position="232"/>
    </location>
</feature>
<feature type="topological domain" description="Periplasmic">
    <location>
        <begin position="233"/>
        <end position="252"/>
    </location>
</feature>
<feature type="transmembrane region" description="Helical">
    <location>
        <begin position="253"/>
        <end position="281"/>
    </location>
</feature>
<feature type="topological domain" description="Cytoplasmic">
    <location>
        <begin position="282"/>
        <end position="287"/>
    </location>
</feature>
<feature type="transmembrane region" description="Helical">
    <location>
        <begin position="288"/>
        <end position="309"/>
    </location>
</feature>
<feature type="topological domain" description="Periplasmic">
    <location>
        <begin position="310"/>
        <end position="329"/>
    </location>
</feature>
<feature type="transmembrane region" description="Helical">
    <location>
        <begin position="330"/>
        <end position="349"/>
    </location>
</feature>
<feature type="transmembrane region" description="Helical">
    <location>
        <begin position="355"/>
        <end position="376"/>
    </location>
</feature>
<feature type="topological domain" description="Periplasmic">
    <location>
        <begin position="377"/>
        <end position="386"/>
    </location>
</feature>
<feature type="intramembrane region" description="Helical">
    <location>
        <begin position="387"/>
        <end position="401"/>
    </location>
</feature>
<feature type="intramembrane region" description="Note=Loop between two helices">
    <location>
        <begin position="402"/>
        <end position="404"/>
    </location>
</feature>
<feature type="intramembrane region" description="Helical">
    <location>
        <begin position="405"/>
        <end position="416"/>
    </location>
</feature>
<feature type="intramembrane region" description="Note=Loop between two helices">
    <location>
        <begin position="417"/>
        <end position="421"/>
    </location>
</feature>
<feature type="transmembrane region" description="Helical">
    <location>
        <begin position="422"/>
        <end position="438"/>
    </location>
</feature>
<feature type="topological domain" description="Cytoplasmic">
    <location>
        <begin position="439"/>
        <end position="473"/>
    </location>
</feature>
<feature type="short sequence motif" description="Selectivity filter part_1">
    <location>
        <begin position="106"/>
        <end position="110"/>
    </location>
</feature>
<feature type="short sequence motif" description="Selectivity filter part_2">
    <location>
        <begin position="146"/>
        <end position="150"/>
    </location>
</feature>
<feature type="short sequence motif" description="Selectivity filter part_3">
    <location>
        <begin position="355"/>
        <end position="359"/>
    </location>
</feature>
<feature type="binding site" evidence="3 11 12 14 15">
    <location>
        <position position="107"/>
    </location>
    <ligand>
        <name>chloride</name>
        <dbReference type="ChEBI" id="CHEBI:17996"/>
    </ligand>
</feature>
<feature type="binding site" evidence="3 13 16 17">
    <location>
        <position position="356"/>
    </location>
    <ligand>
        <name>chloride</name>
        <dbReference type="ChEBI" id="CHEBI:17996"/>
    </ligand>
</feature>
<feature type="binding site" evidence="3 14">
    <location>
        <position position="357"/>
    </location>
    <ligand>
        <name>chloride</name>
        <dbReference type="ChEBI" id="CHEBI:17996"/>
    </ligand>
</feature>
<feature type="binding site" evidence="3 13 14 15 16 17">
    <location>
        <position position="445"/>
    </location>
    <ligand>
        <name>chloride</name>
        <dbReference type="ChEBI" id="CHEBI:17996"/>
    </ligand>
</feature>
<feature type="site" description="Mediates proton transfer from the outer aqueous phase to the interior of the protein; involved in linking H(+) and Cl(-) transport">
    <location>
        <position position="148"/>
    </location>
</feature>
<feature type="site" description="Mediates proton transfer from the protein to the inner aqueous phase">
    <location>
        <position position="203"/>
    </location>
</feature>
<feature type="mutagenesis site" description="Uncouples chloride transport from proton transport." evidence="5">
    <original>S</original>
    <variation>A</variation>
    <location>
        <position position="107"/>
    </location>
</feature>
<feature type="mutagenesis site" description="Abolishes proton transport, but permits the transit of chloride ions. Abolishes gating, permitting continuous rapid transit of chloride ions; when associated with A-445." evidence="3 4 5 8">
    <original>E</original>
    <variation>A</variation>
    <variation>Q</variation>
    <location>
        <position position="148"/>
    </location>
</feature>
<feature type="mutagenesis site" description="Abolishes proton transport, and reduces chloride transport." evidence="9">
    <original>E</original>
    <variation>A</variation>
    <variation>G</variation>
    <variation>Q</variation>
    <variation>S</variation>
    <variation>T</variation>
    <location>
        <position position="203"/>
    </location>
</feature>
<feature type="mutagenesis site" description="Abolishes proton and chloride transport." evidence="9">
    <original>E</original>
    <variation>C</variation>
    <variation>I</variation>
    <variation>L</variation>
    <variation>V</variation>
    <location>
        <position position="203"/>
    </location>
</feature>
<feature type="mutagenesis site" description="No effect on proton and chloride transport." evidence="9">
    <original>E</original>
    <variation>D</variation>
    <variation>H</variation>
    <location>
        <position position="203"/>
    </location>
</feature>
<feature type="mutagenesis site" description="Decreased proton and chloride transport." evidence="9">
    <original>E</original>
    <variation>K</variation>
    <variation>R</variation>
    <location>
        <position position="203"/>
    </location>
</feature>
<feature type="mutagenesis site" description="Abolishes gating, permitting continuous rapid transit of chloride ions; when associated with A-148." evidence="5 7 8">
    <original>Y</original>
    <variation>A</variation>
    <location>
        <position position="445"/>
    </location>
</feature>
<feature type="mutagenesis site" description="No effect." evidence="5 7 8">
    <original>Y</original>
    <variation>F</variation>
    <variation>W</variation>
    <location>
        <position position="445"/>
    </location>
</feature>
<feature type="mutagenesis site" description="Alters stoichiometry of proton/chloride exchange." evidence="5 7 8">
    <original>Y</original>
    <variation>L</variation>
    <location>
        <position position="445"/>
    </location>
</feature>
<feature type="sequence conflict" description="In Ref. 1." evidence="10" ref="1">
    <original>P</original>
    <variation>Q</variation>
    <location>
        <position position="32"/>
    </location>
</feature>
<feature type="helix" evidence="19">
    <location>
        <begin position="18"/>
        <end position="26"/>
    </location>
</feature>
<feature type="strand" evidence="21">
    <location>
        <begin position="28"/>
        <end position="30"/>
    </location>
</feature>
<feature type="helix" evidence="19">
    <location>
        <begin position="33"/>
        <end position="70"/>
    </location>
</feature>
<feature type="strand" evidence="19">
    <location>
        <begin position="72"/>
        <end position="74"/>
    </location>
</feature>
<feature type="helix" evidence="19">
    <location>
        <begin position="75"/>
        <end position="100"/>
    </location>
</feature>
<feature type="helix" evidence="19">
    <location>
        <begin position="102"/>
        <end position="104"/>
    </location>
</feature>
<feature type="helix" evidence="19">
    <location>
        <begin position="109"/>
        <end position="116"/>
    </location>
</feature>
<feature type="helix" evidence="19">
    <location>
        <begin position="124"/>
        <end position="140"/>
    </location>
</feature>
<feature type="helix" evidence="19">
    <location>
        <begin position="148"/>
        <end position="165"/>
    </location>
</feature>
<feature type="helix" evidence="19">
    <location>
        <begin position="171"/>
        <end position="190"/>
    </location>
</feature>
<feature type="helix" evidence="19">
    <location>
        <begin position="193"/>
        <end position="202"/>
    </location>
</feature>
<feature type="strand" evidence="18">
    <location>
        <begin position="203"/>
        <end position="205"/>
    </location>
</feature>
<feature type="strand" evidence="19">
    <location>
        <begin position="207"/>
        <end position="209"/>
    </location>
</feature>
<feature type="helix" evidence="19">
    <location>
        <begin position="215"/>
        <end position="231"/>
    </location>
</feature>
<feature type="turn" evidence="19">
    <location>
        <begin position="232"/>
        <end position="235"/>
    </location>
</feature>
<feature type="helix" evidence="19">
    <location>
        <begin position="249"/>
        <end position="251"/>
    </location>
</feature>
<feature type="helix" evidence="19">
    <location>
        <begin position="252"/>
        <end position="284"/>
    </location>
</feature>
<feature type="helix" evidence="19">
    <location>
        <begin position="288"/>
        <end position="308"/>
    </location>
</feature>
<feature type="helix" evidence="19">
    <location>
        <begin position="310"/>
        <end position="312"/>
    </location>
</feature>
<feature type="strand" evidence="20">
    <location>
        <begin position="316"/>
        <end position="318"/>
    </location>
</feature>
<feature type="helix" evidence="19">
    <location>
        <begin position="319"/>
        <end position="324"/>
    </location>
</feature>
<feature type="helix" evidence="19">
    <location>
        <begin position="330"/>
        <end position="348"/>
    </location>
</feature>
<feature type="turn" evidence="19">
    <location>
        <begin position="349"/>
        <end position="351"/>
    </location>
</feature>
<feature type="strand" evidence="19">
    <location>
        <begin position="353"/>
        <end position="356"/>
    </location>
</feature>
<feature type="helix" evidence="19">
    <location>
        <begin position="357"/>
        <end position="378"/>
    </location>
</feature>
<feature type="helix" evidence="19">
    <location>
        <begin position="380"/>
        <end position="382"/>
    </location>
</feature>
<feature type="helix" evidence="19">
    <location>
        <begin position="386"/>
        <end position="394"/>
    </location>
</feature>
<feature type="helix" evidence="19">
    <location>
        <begin position="396"/>
        <end position="401"/>
    </location>
</feature>
<feature type="helix" evidence="19">
    <location>
        <begin position="405"/>
        <end position="416"/>
    </location>
</feature>
<feature type="helix" evidence="19">
    <location>
        <begin position="419"/>
        <end position="421"/>
    </location>
</feature>
<feature type="helix" evidence="19">
    <location>
        <begin position="422"/>
        <end position="438"/>
    </location>
</feature>
<feature type="helix" evidence="19">
    <location>
        <begin position="444"/>
        <end position="458"/>
    </location>
</feature>
<proteinExistence type="evidence at protein level"/>
<gene>
    <name type="primary">clcA</name>
    <name type="synonym">eriC</name>
    <name type="synonym">yadQ</name>
    <name type="ordered locus">b0155</name>
    <name type="ordered locus">JW5012</name>
</gene>
<sequence length="473" mass="50349">MKTDTPSLETPQAARLRRRQLIRQLLERDKTPLAILFMAAVVGTLVGLAAVAFDKGVAWLQNQRMGALVHTADNYPLLLTVAFLCSAVLAMFGYFLVRKYAPEAGGSGIPEIEGALEDQRPVRWWRVLPVKFFGGLGTLGGGMVLGREGPTVQIGGNIGRMVLDIFRLKGDEARHTLLATGAAAGLAAAFNAPLAGILFIIEEMRPQFRYTLISIKAVFIGVIMSTIMYRIFNHEVALIDVGKLSDAPLNTLWLYLILGIIFGIFGPIFNKWVLGMQDLLHRVHGGNITKWVLMGGAIGGLCGLLGFVAPATSGGGFNLIPIATAGNFSMGMLVFIFVARVITTLLCFSSGAPGGIFAPMLALGTVLGTAFGMVAVELFPQYHLEAGTFAIAGMGALLAASIRAPLTGIILVLEMTDNYQLILPMIITGLGATLLAQFTGGKPLYSAILARTLAKQEAEQLARSKAASASENT</sequence>